<name>AROE_NEIFL</name>
<reference key="1">
    <citation type="journal article" date="1997" name="Mol. Microbiol.">
        <title>Interspecies recombination, and phylogenetic distortions, within the glutamine synthetase and shikimate dehydrogenase genes of Neisseria meningitidis and commensal Neisseria species.</title>
        <authorList>
            <person name="Zhou J."/>
            <person name="Bowler L.D."/>
            <person name="Spratt B.G."/>
        </authorList>
    </citation>
    <scope>NUCLEOTIDE SEQUENCE [GENOMIC DNA]</scope>
    <source>
        <strain>LNP 444</strain>
    </source>
</reference>
<keyword id="KW-0028">Amino-acid biosynthesis</keyword>
<keyword id="KW-0057">Aromatic amino acid biosynthesis</keyword>
<keyword id="KW-0521">NADP</keyword>
<keyword id="KW-0560">Oxidoreductase</keyword>
<organism>
    <name type="scientific">Neisseria flavescens</name>
    <dbReference type="NCBI Taxonomy" id="484"/>
    <lineage>
        <taxon>Bacteria</taxon>
        <taxon>Pseudomonadati</taxon>
        <taxon>Pseudomonadota</taxon>
        <taxon>Betaproteobacteria</taxon>
        <taxon>Neisseriales</taxon>
        <taxon>Neisseriaceae</taxon>
        <taxon>Neisseria</taxon>
    </lineage>
</organism>
<protein>
    <recommendedName>
        <fullName evidence="1">Shikimate dehydrogenase (NADP(+))</fullName>
        <shortName evidence="1">SDH</shortName>
        <ecNumber evidence="1">1.1.1.25</ecNumber>
    </recommendedName>
</protein>
<accession>P95340</accession>
<feature type="chain" id="PRO_0000136016" description="Shikimate dehydrogenase (NADP(+))">
    <location>
        <begin position="1"/>
        <end position="269"/>
    </location>
</feature>
<feature type="active site" description="Proton acceptor" evidence="1">
    <location>
        <position position="68"/>
    </location>
</feature>
<feature type="binding site" evidence="1">
    <location>
        <begin position="17"/>
        <end position="19"/>
    </location>
    <ligand>
        <name>shikimate</name>
        <dbReference type="ChEBI" id="CHEBI:36208"/>
    </ligand>
</feature>
<feature type="binding site" evidence="1">
    <location>
        <position position="64"/>
    </location>
    <ligand>
        <name>shikimate</name>
        <dbReference type="ChEBI" id="CHEBI:36208"/>
    </ligand>
</feature>
<feature type="binding site" evidence="1">
    <location>
        <position position="80"/>
    </location>
    <ligand>
        <name>NADP(+)</name>
        <dbReference type="ChEBI" id="CHEBI:58349"/>
    </ligand>
</feature>
<feature type="binding site" evidence="1">
    <location>
        <position position="89"/>
    </location>
    <ligand>
        <name>shikimate</name>
        <dbReference type="ChEBI" id="CHEBI:36208"/>
    </ligand>
</feature>
<feature type="binding site" evidence="1">
    <location>
        <position position="105"/>
    </location>
    <ligand>
        <name>shikimate</name>
        <dbReference type="ChEBI" id="CHEBI:36208"/>
    </ligand>
</feature>
<feature type="binding site" evidence="1">
    <location>
        <begin position="130"/>
        <end position="134"/>
    </location>
    <ligand>
        <name>NADP(+)</name>
        <dbReference type="ChEBI" id="CHEBI:58349"/>
    </ligand>
</feature>
<feature type="binding site" evidence="1">
    <location>
        <begin position="154"/>
        <end position="159"/>
    </location>
    <ligand>
        <name>NADP(+)</name>
        <dbReference type="ChEBI" id="CHEBI:58349"/>
    </ligand>
</feature>
<feature type="binding site" evidence="1">
    <location>
        <position position="213"/>
    </location>
    <ligand>
        <name>NADP(+)</name>
        <dbReference type="ChEBI" id="CHEBI:58349"/>
    </ligand>
</feature>
<feature type="binding site" evidence="1">
    <location>
        <position position="215"/>
    </location>
    <ligand>
        <name>shikimate</name>
        <dbReference type="ChEBI" id="CHEBI:36208"/>
    </ligand>
</feature>
<feature type="binding site" evidence="1">
    <location>
        <position position="237"/>
    </location>
    <ligand>
        <name>NADP(+)</name>
        <dbReference type="ChEBI" id="CHEBI:58349"/>
    </ligand>
</feature>
<dbReference type="EC" id="1.1.1.25" evidence="1"/>
<dbReference type="EMBL" id="U82847">
    <property type="protein sequence ID" value="AAC44918.1"/>
    <property type="molecule type" value="Genomic_DNA"/>
</dbReference>
<dbReference type="RefSeq" id="WP_003680082.1">
    <property type="nucleotide sequence ID" value="NZ_UGQV01000004.1"/>
</dbReference>
<dbReference type="SMR" id="P95340"/>
<dbReference type="STRING" id="484.TW91_1051"/>
<dbReference type="GeneID" id="49970207"/>
<dbReference type="UniPathway" id="UPA00053">
    <property type="reaction ID" value="UER00087"/>
</dbReference>
<dbReference type="GO" id="GO:0005829">
    <property type="term" value="C:cytosol"/>
    <property type="evidence" value="ECO:0007669"/>
    <property type="project" value="TreeGrafter"/>
</dbReference>
<dbReference type="GO" id="GO:0050661">
    <property type="term" value="F:NADP binding"/>
    <property type="evidence" value="ECO:0007669"/>
    <property type="project" value="InterPro"/>
</dbReference>
<dbReference type="GO" id="GO:0004764">
    <property type="term" value="F:shikimate 3-dehydrogenase (NADP+) activity"/>
    <property type="evidence" value="ECO:0007669"/>
    <property type="project" value="UniProtKB-UniRule"/>
</dbReference>
<dbReference type="GO" id="GO:0008652">
    <property type="term" value="P:amino acid biosynthetic process"/>
    <property type="evidence" value="ECO:0007669"/>
    <property type="project" value="UniProtKB-KW"/>
</dbReference>
<dbReference type="GO" id="GO:0009073">
    <property type="term" value="P:aromatic amino acid family biosynthetic process"/>
    <property type="evidence" value="ECO:0007669"/>
    <property type="project" value="UniProtKB-KW"/>
</dbReference>
<dbReference type="GO" id="GO:0009423">
    <property type="term" value="P:chorismate biosynthetic process"/>
    <property type="evidence" value="ECO:0007669"/>
    <property type="project" value="UniProtKB-UniRule"/>
</dbReference>
<dbReference type="GO" id="GO:0019632">
    <property type="term" value="P:shikimate metabolic process"/>
    <property type="evidence" value="ECO:0007669"/>
    <property type="project" value="InterPro"/>
</dbReference>
<dbReference type="CDD" id="cd01065">
    <property type="entry name" value="NAD_bind_Shikimate_DH"/>
    <property type="match status" value="1"/>
</dbReference>
<dbReference type="FunFam" id="3.40.50.10860:FF:000006">
    <property type="entry name" value="Shikimate dehydrogenase (NADP(+))"/>
    <property type="match status" value="1"/>
</dbReference>
<dbReference type="Gene3D" id="3.40.50.10860">
    <property type="entry name" value="Leucine Dehydrogenase, chain A, domain 1"/>
    <property type="match status" value="1"/>
</dbReference>
<dbReference type="Gene3D" id="3.40.50.720">
    <property type="entry name" value="NAD(P)-binding Rossmann-like Domain"/>
    <property type="match status" value="1"/>
</dbReference>
<dbReference type="HAMAP" id="MF_00222">
    <property type="entry name" value="Shikimate_DH_AroE"/>
    <property type="match status" value="1"/>
</dbReference>
<dbReference type="InterPro" id="IPR046346">
    <property type="entry name" value="Aminoacid_DH-like_N_sf"/>
</dbReference>
<dbReference type="InterPro" id="IPR036291">
    <property type="entry name" value="NAD(P)-bd_dom_sf"/>
</dbReference>
<dbReference type="InterPro" id="IPR041121">
    <property type="entry name" value="SDH_C"/>
</dbReference>
<dbReference type="InterPro" id="IPR011342">
    <property type="entry name" value="Shikimate_DH"/>
</dbReference>
<dbReference type="InterPro" id="IPR013708">
    <property type="entry name" value="Shikimate_DH-bd_N"/>
</dbReference>
<dbReference type="InterPro" id="IPR022893">
    <property type="entry name" value="Shikimate_DH_fam"/>
</dbReference>
<dbReference type="InterPro" id="IPR006151">
    <property type="entry name" value="Shikm_DH/Glu-tRNA_Rdtase"/>
</dbReference>
<dbReference type="NCBIfam" id="TIGR00507">
    <property type="entry name" value="aroE"/>
    <property type="match status" value="1"/>
</dbReference>
<dbReference type="NCBIfam" id="NF001310">
    <property type="entry name" value="PRK00258.1-2"/>
    <property type="match status" value="1"/>
</dbReference>
<dbReference type="PANTHER" id="PTHR21089:SF1">
    <property type="entry name" value="BIFUNCTIONAL 3-DEHYDROQUINATE DEHYDRATASE_SHIKIMATE DEHYDROGENASE, CHLOROPLASTIC"/>
    <property type="match status" value="1"/>
</dbReference>
<dbReference type="PANTHER" id="PTHR21089">
    <property type="entry name" value="SHIKIMATE DEHYDROGENASE"/>
    <property type="match status" value="1"/>
</dbReference>
<dbReference type="Pfam" id="PF18317">
    <property type="entry name" value="SDH_C"/>
    <property type="match status" value="1"/>
</dbReference>
<dbReference type="Pfam" id="PF01488">
    <property type="entry name" value="Shikimate_DH"/>
    <property type="match status" value="1"/>
</dbReference>
<dbReference type="Pfam" id="PF08501">
    <property type="entry name" value="Shikimate_dh_N"/>
    <property type="match status" value="1"/>
</dbReference>
<dbReference type="SUPFAM" id="SSF53223">
    <property type="entry name" value="Aminoacid dehydrogenase-like, N-terminal domain"/>
    <property type="match status" value="1"/>
</dbReference>
<dbReference type="SUPFAM" id="SSF51735">
    <property type="entry name" value="NAD(P)-binding Rossmann-fold domains"/>
    <property type="match status" value="1"/>
</dbReference>
<gene>
    <name evidence="1" type="primary">aroE</name>
</gene>
<comment type="function">
    <text evidence="1">Involved in the biosynthesis of the chorismate, which leads to the biosynthesis of aromatic amino acids. Catalyzes the reversible NADPH linked reduction of 3-dehydroshikimate (DHSA) to yield shikimate (SA).</text>
</comment>
<comment type="catalytic activity">
    <reaction evidence="1">
        <text>shikimate + NADP(+) = 3-dehydroshikimate + NADPH + H(+)</text>
        <dbReference type="Rhea" id="RHEA:17737"/>
        <dbReference type="ChEBI" id="CHEBI:15378"/>
        <dbReference type="ChEBI" id="CHEBI:16630"/>
        <dbReference type="ChEBI" id="CHEBI:36208"/>
        <dbReference type="ChEBI" id="CHEBI:57783"/>
        <dbReference type="ChEBI" id="CHEBI:58349"/>
        <dbReference type="EC" id="1.1.1.25"/>
    </reaction>
</comment>
<comment type="pathway">
    <text evidence="1">Metabolic intermediate biosynthesis; chorismate biosynthesis; chorismate from D-erythrose 4-phosphate and phosphoenolpyruvate: step 4/7.</text>
</comment>
<comment type="subunit">
    <text evidence="1">Homodimer.</text>
</comment>
<comment type="similarity">
    <text evidence="1">Belongs to the shikimate dehydrogenase family.</text>
</comment>
<sequence length="269" mass="28697">MTTLPRYAVFGNPVAHSKSPQIHRQFALQEGVDIEYERICADIGGFAQAVSTFFETGGCGANVTVPFKQEAFDLADEHSERALAAGAVNTLILLKNGKLRGDNTDGIGLANDITQVKNIAIEDKTILLLGAGGAVRGVIPVLKEHRPARIVITNRTHAKAEELARLFGIEAVPMADLNGGFDIIINGTSGGLSGQLPAVSPEIFRDCRLAYDMVYGEAALAFLNFAQSNGAAEVSDGLGMLVGQAAASYHIWRGFTPDIRPVIEYMKAL</sequence>
<proteinExistence type="inferred from homology"/>
<evidence type="ECO:0000255" key="1">
    <source>
        <dbReference type="HAMAP-Rule" id="MF_00222"/>
    </source>
</evidence>